<evidence type="ECO:0000255" key="1">
    <source>
        <dbReference type="HAMAP-Rule" id="MF_00291"/>
    </source>
</evidence>
<evidence type="ECO:0000305" key="2"/>
<gene>
    <name evidence="1" type="primary">rpsB</name>
    <name type="ordered locus">Abu_0540</name>
</gene>
<comment type="similarity">
    <text evidence="1">Belongs to the universal ribosomal protein uS2 family.</text>
</comment>
<organism>
    <name type="scientific">Aliarcobacter butzleri (strain RM4018)</name>
    <name type="common">Arcobacter butzleri</name>
    <dbReference type="NCBI Taxonomy" id="367737"/>
    <lineage>
        <taxon>Bacteria</taxon>
        <taxon>Pseudomonadati</taxon>
        <taxon>Campylobacterota</taxon>
        <taxon>Epsilonproteobacteria</taxon>
        <taxon>Campylobacterales</taxon>
        <taxon>Arcobacteraceae</taxon>
        <taxon>Aliarcobacter</taxon>
    </lineage>
</organism>
<proteinExistence type="inferred from homology"/>
<name>RS2_ALIB4</name>
<protein>
    <recommendedName>
        <fullName evidence="1">Small ribosomal subunit protein uS2</fullName>
    </recommendedName>
    <alternativeName>
        <fullName evidence="2">30S ribosomal protein S2</fullName>
    </alternativeName>
</protein>
<reference key="1">
    <citation type="journal article" date="2007" name="PLoS ONE">
        <title>The complete genome sequence and analysis of the Epsilonproteobacterium Arcobacter butzleri.</title>
        <authorList>
            <person name="Miller W.G."/>
            <person name="Parker C.T."/>
            <person name="Rubenfield M."/>
            <person name="Mendz G.L."/>
            <person name="Woesten M.M.S.M."/>
            <person name="Ussery D.W."/>
            <person name="Stolz J.F."/>
            <person name="Binnewies T.T."/>
            <person name="Hallin P.F."/>
            <person name="Wang G."/>
            <person name="Malek J.A."/>
            <person name="Rogosin A."/>
            <person name="Stanker L.H."/>
            <person name="Mandrell R.E."/>
        </authorList>
    </citation>
    <scope>NUCLEOTIDE SEQUENCE [LARGE SCALE GENOMIC DNA]</scope>
    <source>
        <strain>RM4018</strain>
    </source>
</reference>
<dbReference type="EMBL" id="CP000361">
    <property type="protein sequence ID" value="ABV66807.1"/>
    <property type="molecule type" value="Genomic_DNA"/>
</dbReference>
<dbReference type="RefSeq" id="WP_004510605.1">
    <property type="nucleotide sequence ID" value="NC_009850.1"/>
</dbReference>
<dbReference type="SMR" id="A8ES83"/>
<dbReference type="STRING" id="367737.Abu_0540"/>
<dbReference type="GeneID" id="24304039"/>
<dbReference type="KEGG" id="abu:Abu_0540"/>
<dbReference type="eggNOG" id="COG0052">
    <property type="taxonomic scope" value="Bacteria"/>
</dbReference>
<dbReference type="HOGENOM" id="CLU_040318_1_2_7"/>
<dbReference type="Proteomes" id="UP000001136">
    <property type="component" value="Chromosome"/>
</dbReference>
<dbReference type="GO" id="GO:0022627">
    <property type="term" value="C:cytosolic small ribosomal subunit"/>
    <property type="evidence" value="ECO:0007669"/>
    <property type="project" value="TreeGrafter"/>
</dbReference>
<dbReference type="GO" id="GO:0003735">
    <property type="term" value="F:structural constituent of ribosome"/>
    <property type="evidence" value="ECO:0007669"/>
    <property type="project" value="InterPro"/>
</dbReference>
<dbReference type="GO" id="GO:0006412">
    <property type="term" value="P:translation"/>
    <property type="evidence" value="ECO:0007669"/>
    <property type="project" value="UniProtKB-UniRule"/>
</dbReference>
<dbReference type="CDD" id="cd01425">
    <property type="entry name" value="RPS2"/>
    <property type="match status" value="1"/>
</dbReference>
<dbReference type="FunFam" id="1.10.287.610:FF:000001">
    <property type="entry name" value="30S ribosomal protein S2"/>
    <property type="match status" value="1"/>
</dbReference>
<dbReference type="Gene3D" id="3.40.50.10490">
    <property type="entry name" value="Glucose-6-phosphate isomerase like protein, domain 1"/>
    <property type="match status" value="1"/>
</dbReference>
<dbReference type="Gene3D" id="1.10.287.610">
    <property type="entry name" value="Helix hairpin bin"/>
    <property type="match status" value="1"/>
</dbReference>
<dbReference type="HAMAP" id="MF_00291_B">
    <property type="entry name" value="Ribosomal_uS2_B"/>
    <property type="match status" value="1"/>
</dbReference>
<dbReference type="InterPro" id="IPR001865">
    <property type="entry name" value="Ribosomal_uS2"/>
</dbReference>
<dbReference type="InterPro" id="IPR005706">
    <property type="entry name" value="Ribosomal_uS2_bac/mit/plastid"/>
</dbReference>
<dbReference type="InterPro" id="IPR018130">
    <property type="entry name" value="Ribosomal_uS2_CS"/>
</dbReference>
<dbReference type="InterPro" id="IPR023591">
    <property type="entry name" value="Ribosomal_uS2_flav_dom_sf"/>
</dbReference>
<dbReference type="NCBIfam" id="TIGR01011">
    <property type="entry name" value="rpsB_bact"/>
    <property type="match status" value="1"/>
</dbReference>
<dbReference type="PANTHER" id="PTHR12534">
    <property type="entry name" value="30S RIBOSOMAL PROTEIN S2 PROKARYOTIC AND ORGANELLAR"/>
    <property type="match status" value="1"/>
</dbReference>
<dbReference type="PANTHER" id="PTHR12534:SF0">
    <property type="entry name" value="SMALL RIBOSOMAL SUBUNIT PROTEIN US2M"/>
    <property type="match status" value="1"/>
</dbReference>
<dbReference type="Pfam" id="PF00318">
    <property type="entry name" value="Ribosomal_S2"/>
    <property type="match status" value="1"/>
</dbReference>
<dbReference type="PRINTS" id="PR00395">
    <property type="entry name" value="RIBOSOMALS2"/>
</dbReference>
<dbReference type="SUPFAM" id="SSF52313">
    <property type="entry name" value="Ribosomal protein S2"/>
    <property type="match status" value="1"/>
</dbReference>
<dbReference type="PROSITE" id="PS00962">
    <property type="entry name" value="RIBOSOMAL_S2_1"/>
    <property type="match status" value="1"/>
</dbReference>
<sequence length="265" mass="30019">MVTMKDLLECGVHFGHQTRRWNPKMKKFIFGVRKNIYIIDLQKTLRYFRYTYNVVRDRAAEGQTMIFVGTKKQASETIKKAAISCGMPYVNHRWLGGMLTNFGTIKKSIRKLEIIKKMREEGQLDLLTKKEALMLTRKEEKLELYLGGIKEMNKLPDMMFVLDAVKEKIAIQEARRLGITVVAPLDTNCDPDVVDLPIPGNDDAIRSIHLFCNEMAAAMNEGKAALADETGVEVEPISAEEKEELIAEAVAEGEEFNFAEEGENA</sequence>
<keyword id="KW-1185">Reference proteome</keyword>
<keyword id="KW-0687">Ribonucleoprotein</keyword>
<keyword id="KW-0689">Ribosomal protein</keyword>
<feature type="chain" id="PRO_1000059258" description="Small ribosomal subunit protein uS2">
    <location>
        <begin position="1"/>
        <end position="265"/>
    </location>
</feature>
<accession>A8ES83</accession>